<evidence type="ECO:0000250" key="1"/>
<evidence type="ECO:0000255" key="2">
    <source>
        <dbReference type="PROSITE-ProRule" id="PRU00813"/>
    </source>
</evidence>
<evidence type="ECO:0000255" key="3">
    <source>
        <dbReference type="PROSITE-ProRule" id="PRU00814"/>
    </source>
</evidence>
<evidence type="ECO:0000305" key="4"/>
<gene>
    <name type="primary">dhak</name>
    <name type="synonym">dak</name>
    <name type="ORF">DDB_G0269274</name>
</gene>
<accession>Q55EE0</accession>
<name>DHAK_DICDI</name>
<feature type="chain" id="PRO_0000328437" description="Probable dihydroxyacetone kinase">
    <location>
        <begin position="1"/>
        <end position="648"/>
    </location>
</feature>
<feature type="domain" description="DhaK" evidence="3">
    <location>
        <begin position="7"/>
        <end position="391"/>
    </location>
</feature>
<feature type="domain" description="DhaL" evidence="2">
    <location>
        <begin position="433"/>
        <end position="645"/>
    </location>
</feature>
<feature type="active site" description="Tele-hemiaminal-histidine intermediate" evidence="3">
    <location>
        <position position="247"/>
    </location>
</feature>
<feature type="binding site" evidence="1">
    <location>
        <begin position="55"/>
        <end position="58"/>
    </location>
    <ligand>
        <name>substrate</name>
    </ligand>
</feature>
<feature type="binding site" evidence="1">
    <location>
        <position position="106"/>
    </location>
    <ligand>
        <name>substrate</name>
    </ligand>
</feature>
<feature type="binding site" evidence="1">
    <location>
        <position position="111"/>
    </location>
    <ligand>
        <name>substrate</name>
    </ligand>
</feature>
<feature type="binding site" evidence="1">
    <location>
        <begin position="462"/>
        <end position="465"/>
    </location>
    <ligand>
        <name>ATP</name>
        <dbReference type="ChEBI" id="CHEBI:30616"/>
    </ligand>
</feature>
<feature type="binding site" evidence="1">
    <location>
        <begin position="506"/>
        <end position="507"/>
    </location>
    <ligand>
        <name>ATP</name>
        <dbReference type="ChEBI" id="CHEBI:30616"/>
    </ligand>
</feature>
<feature type="binding site" evidence="1">
    <location>
        <position position="554"/>
    </location>
    <ligand>
        <name>ATP</name>
        <dbReference type="ChEBI" id="CHEBI:30616"/>
    </ligand>
</feature>
<feature type="binding site" evidence="1">
    <location>
        <begin position="562"/>
        <end position="563"/>
    </location>
    <ligand>
        <name>ATP</name>
        <dbReference type="ChEBI" id="CHEBI:30616"/>
    </ligand>
</feature>
<feature type="binding site" evidence="1">
    <location>
        <begin position="630"/>
        <end position="632"/>
    </location>
    <ligand>
        <name>ATP</name>
        <dbReference type="ChEBI" id="CHEBI:30616"/>
    </ligand>
</feature>
<proteinExistence type="inferred from homology"/>
<sequence length="648" mass="71006">MKKIINNPQNVVSEMIDGFTQSSRDLLKLKGNFNVVVRSDYSQIKDRVTLISGGGSGHEPAHIGYIGNAMLTGAVCGDVFASPSAKQIFMAIKSVAGKMGCILIVKNYMGDNGSFSIAREMCKSQLPDIRVEIITVDDDISSILMKLNEFSNDNNDNIQDIRDKYKSITNRRGIAGTVLVHKILGGLAEQGKSIDEILKFYNKYISPSKSLNLVTMGVGLSSCIIPSVGSPSFTLNEKEMEIGLGIHGEFGIEKVELKPSKQIIKSLIDNLLKILPYSNNNNNNNNNNNNNNNNNNNNNNNSCGISCGSDGEDKSLIVLINNLGSTTNMEMAIATNDCLNYLHEKGFTVERLITGTLMTSLEMAGISISLLLIKNNQIINLIDLKTNAMGWPNSVLKPYKNKEDSILTLDENDSHEIKYDNLKSITISKENGEILKEIVLLGCNSLIENSNKLTDLDKQVGDGDLGTTLENLSKSIKKSIDTIPFDKPCYTFRKISLIIQELIGGSSGLFYSIFFLRLSNSLYERSTVNGKNQISTNDWGLSLIDAVNAIKELGKADIGDCTMLDSLIPAINKINQCCKDNENSSSSFDLLNTLKLASKEAQLGSESTIEMIAKKGRSSYLGERTSHIMDPGAHAIEIIFKSFLSIKK</sequence>
<comment type="function">
    <text evidence="1">Catalyzes both the phosphorylation of dihydroxyacetone and of glyceraldehyde.</text>
</comment>
<comment type="catalytic activity">
    <reaction>
        <text>dihydroxyacetone + ATP = dihydroxyacetone phosphate + ADP + H(+)</text>
        <dbReference type="Rhea" id="RHEA:15773"/>
        <dbReference type="ChEBI" id="CHEBI:15378"/>
        <dbReference type="ChEBI" id="CHEBI:16016"/>
        <dbReference type="ChEBI" id="CHEBI:30616"/>
        <dbReference type="ChEBI" id="CHEBI:57642"/>
        <dbReference type="ChEBI" id="CHEBI:456216"/>
        <dbReference type="EC" id="2.7.1.29"/>
    </reaction>
</comment>
<comment type="catalytic activity">
    <reaction>
        <text>D-glyceraldehyde + ATP = D-glyceraldehyde 3-phosphate + ADP + H(+)</text>
        <dbReference type="Rhea" id="RHEA:13941"/>
        <dbReference type="ChEBI" id="CHEBI:15378"/>
        <dbReference type="ChEBI" id="CHEBI:17378"/>
        <dbReference type="ChEBI" id="CHEBI:30616"/>
        <dbReference type="ChEBI" id="CHEBI:59776"/>
        <dbReference type="ChEBI" id="CHEBI:456216"/>
        <dbReference type="EC" id="2.7.1.28"/>
    </reaction>
</comment>
<comment type="similarity">
    <text evidence="4">Belongs to the dihydroxyacetone kinase (DAK) family.</text>
</comment>
<reference key="1">
    <citation type="journal article" date="2005" name="Nature">
        <title>The genome of the social amoeba Dictyostelium discoideum.</title>
        <authorList>
            <person name="Eichinger L."/>
            <person name="Pachebat J.A."/>
            <person name="Gloeckner G."/>
            <person name="Rajandream M.A."/>
            <person name="Sucgang R."/>
            <person name="Berriman M."/>
            <person name="Song J."/>
            <person name="Olsen R."/>
            <person name="Szafranski K."/>
            <person name="Xu Q."/>
            <person name="Tunggal B."/>
            <person name="Kummerfeld S."/>
            <person name="Madera M."/>
            <person name="Konfortov B.A."/>
            <person name="Rivero F."/>
            <person name="Bankier A.T."/>
            <person name="Lehmann R."/>
            <person name="Hamlin N."/>
            <person name="Davies R."/>
            <person name="Gaudet P."/>
            <person name="Fey P."/>
            <person name="Pilcher K."/>
            <person name="Chen G."/>
            <person name="Saunders D."/>
            <person name="Sodergren E.J."/>
            <person name="Davis P."/>
            <person name="Kerhornou A."/>
            <person name="Nie X."/>
            <person name="Hall N."/>
            <person name="Anjard C."/>
            <person name="Hemphill L."/>
            <person name="Bason N."/>
            <person name="Farbrother P."/>
            <person name="Desany B."/>
            <person name="Just E."/>
            <person name="Morio T."/>
            <person name="Rost R."/>
            <person name="Churcher C.M."/>
            <person name="Cooper J."/>
            <person name="Haydock S."/>
            <person name="van Driessche N."/>
            <person name="Cronin A."/>
            <person name="Goodhead I."/>
            <person name="Muzny D.M."/>
            <person name="Mourier T."/>
            <person name="Pain A."/>
            <person name="Lu M."/>
            <person name="Harper D."/>
            <person name="Lindsay R."/>
            <person name="Hauser H."/>
            <person name="James K.D."/>
            <person name="Quiles M."/>
            <person name="Madan Babu M."/>
            <person name="Saito T."/>
            <person name="Buchrieser C."/>
            <person name="Wardroper A."/>
            <person name="Felder M."/>
            <person name="Thangavelu M."/>
            <person name="Johnson D."/>
            <person name="Knights A."/>
            <person name="Loulseged H."/>
            <person name="Mungall K.L."/>
            <person name="Oliver K."/>
            <person name="Price C."/>
            <person name="Quail M.A."/>
            <person name="Urushihara H."/>
            <person name="Hernandez J."/>
            <person name="Rabbinowitsch E."/>
            <person name="Steffen D."/>
            <person name="Sanders M."/>
            <person name="Ma J."/>
            <person name="Kohara Y."/>
            <person name="Sharp S."/>
            <person name="Simmonds M.N."/>
            <person name="Spiegler S."/>
            <person name="Tivey A."/>
            <person name="Sugano S."/>
            <person name="White B."/>
            <person name="Walker D."/>
            <person name="Woodward J.R."/>
            <person name="Winckler T."/>
            <person name="Tanaka Y."/>
            <person name="Shaulsky G."/>
            <person name="Schleicher M."/>
            <person name="Weinstock G.M."/>
            <person name="Rosenthal A."/>
            <person name="Cox E.C."/>
            <person name="Chisholm R.L."/>
            <person name="Gibbs R.A."/>
            <person name="Loomis W.F."/>
            <person name="Platzer M."/>
            <person name="Kay R.R."/>
            <person name="Williams J.G."/>
            <person name="Dear P.H."/>
            <person name="Noegel A.A."/>
            <person name="Barrell B.G."/>
            <person name="Kuspa A."/>
        </authorList>
    </citation>
    <scope>NUCLEOTIDE SEQUENCE [LARGE SCALE GENOMIC DNA]</scope>
    <source>
        <strain>AX4</strain>
    </source>
</reference>
<keyword id="KW-0067">ATP-binding</keyword>
<keyword id="KW-0418">Kinase</keyword>
<keyword id="KW-0456">Lyase</keyword>
<keyword id="KW-0547">Nucleotide-binding</keyword>
<keyword id="KW-1185">Reference proteome</keyword>
<keyword id="KW-0808">Transferase</keyword>
<dbReference type="EC" id="2.7.1.28"/>
<dbReference type="EC" id="2.7.1.29"/>
<dbReference type="EMBL" id="AAFI02000005">
    <property type="protein sequence ID" value="EAL71987.1"/>
    <property type="molecule type" value="Genomic_DNA"/>
</dbReference>
<dbReference type="RefSeq" id="XP_645841.1">
    <property type="nucleotide sequence ID" value="XM_640749.1"/>
</dbReference>
<dbReference type="SMR" id="Q55EE0"/>
<dbReference type="FunCoup" id="Q55EE0">
    <property type="interactions" value="361"/>
</dbReference>
<dbReference type="STRING" id="44689.Q55EE0"/>
<dbReference type="PaxDb" id="44689-DDB0266459"/>
<dbReference type="EnsemblProtists" id="EAL71987">
    <property type="protein sequence ID" value="EAL71987"/>
    <property type="gene ID" value="DDB_G0269274"/>
</dbReference>
<dbReference type="GeneID" id="8616785"/>
<dbReference type="KEGG" id="ddi:DDB_G0269274"/>
<dbReference type="dictyBase" id="DDB_G0269274">
    <property type="gene designation" value="dhak"/>
</dbReference>
<dbReference type="VEuPathDB" id="AmoebaDB:DDB_G0269274"/>
<dbReference type="eggNOG" id="KOG2426">
    <property type="taxonomic scope" value="Eukaryota"/>
</dbReference>
<dbReference type="HOGENOM" id="CLU_017054_6_1_1"/>
<dbReference type="InParanoid" id="Q55EE0"/>
<dbReference type="OMA" id="ALNMNGF"/>
<dbReference type="PhylomeDB" id="Q55EE0"/>
<dbReference type="Reactome" id="R-DDI-70350">
    <property type="pathway name" value="Fructose catabolism"/>
</dbReference>
<dbReference type="PRO" id="PR:Q55EE0"/>
<dbReference type="Proteomes" id="UP000002195">
    <property type="component" value="Chromosome 1"/>
</dbReference>
<dbReference type="GO" id="GO:0005829">
    <property type="term" value="C:cytosol"/>
    <property type="evidence" value="ECO:0000318"/>
    <property type="project" value="GO_Central"/>
</dbReference>
<dbReference type="GO" id="GO:0005524">
    <property type="term" value="F:ATP binding"/>
    <property type="evidence" value="ECO:0007669"/>
    <property type="project" value="UniProtKB-KW"/>
</dbReference>
<dbReference type="GO" id="GO:0004371">
    <property type="term" value="F:glycerone kinase activity"/>
    <property type="evidence" value="ECO:0000318"/>
    <property type="project" value="GO_Central"/>
</dbReference>
<dbReference type="GO" id="GO:0016829">
    <property type="term" value="F:lyase activity"/>
    <property type="evidence" value="ECO:0007669"/>
    <property type="project" value="UniProtKB-KW"/>
</dbReference>
<dbReference type="GO" id="GO:0050354">
    <property type="term" value="F:triokinase activity"/>
    <property type="evidence" value="ECO:0007669"/>
    <property type="project" value="UniProtKB-EC"/>
</dbReference>
<dbReference type="GO" id="GO:0019563">
    <property type="term" value="P:glycerol catabolic process"/>
    <property type="evidence" value="ECO:0000318"/>
    <property type="project" value="GO_Central"/>
</dbReference>
<dbReference type="FunFam" id="3.40.50.10440:FF:000001">
    <property type="entry name" value="Dihydroxyacetone kinase, DhaK subunit"/>
    <property type="match status" value="1"/>
</dbReference>
<dbReference type="FunFam" id="1.25.40.340:FF:000002">
    <property type="entry name" value="Dihydroxyacetone kinase, L subunit"/>
    <property type="match status" value="1"/>
</dbReference>
<dbReference type="Gene3D" id="1.25.40.340">
    <property type="match status" value="1"/>
</dbReference>
<dbReference type="Gene3D" id="3.40.50.10440">
    <property type="entry name" value="Dihydroxyacetone kinase, domain 1"/>
    <property type="match status" value="1"/>
</dbReference>
<dbReference type="Gene3D" id="3.30.1180.20">
    <property type="entry name" value="Dihydroxyacetone kinase, domain 2"/>
    <property type="match status" value="1"/>
</dbReference>
<dbReference type="InterPro" id="IPR004006">
    <property type="entry name" value="DhaK_dom"/>
</dbReference>
<dbReference type="InterPro" id="IPR004007">
    <property type="entry name" value="DhaL_dom"/>
</dbReference>
<dbReference type="InterPro" id="IPR036117">
    <property type="entry name" value="DhaL_dom_sf"/>
</dbReference>
<dbReference type="InterPro" id="IPR050861">
    <property type="entry name" value="Dihydroxyacetone_Kinase"/>
</dbReference>
<dbReference type="PANTHER" id="PTHR28629">
    <property type="entry name" value="TRIOKINASE/FMN CYCLASE"/>
    <property type="match status" value="1"/>
</dbReference>
<dbReference type="PANTHER" id="PTHR28629:SF4">
    <property type="entry name" value="TRIOKINASE_FMN CYCLASE"/>
    <property type="match status" value="1"/>
</dbReference>
<dbReference type="Pfam" id="PF02733">
    <property type="entry name" value="Dak1"/>
    <property type="match status" value="2"/>
</dbReference>
<dbReference type="Pfam" id="PF02734">
    <property type="entry name" value="Dak2"/>
    <property type="match status" value="1"/>
</dbReference>
<dbReference type="SMART" id="SM01120">
    <property type="entry name" value="Dak2"/>
    <property type="match status" value="1"/>
</dbReference>
<dbReference type="SUPFAM" id="SSF82549">
    <property type="entry name" value="DAK1/DegV-like"/>
    <property type="match status" value="1"/>
</dbReference>
<dbReference type="SUPFAM" id="SSF101473">
    <property type="entry name" value="DhaL-like"/>
    <property type="match status" value="1"/>
</dbReference>
<dbReference type="PROSITE" id="PS51481">
    <property type="entry name" value="DHAK"/>
    <property type="match status" value="1"/>
</dbReference>
<dbReference type="PROSITE" id="PS51480">
    <property type="entry name" value="DHAL"/>
    <property type="match status" value="1"/>
</dbReference>
<organism>
    <name type="scientific">Dictyostelium discoideum</name>
    <name type="common">Social amoeba</name>
    <dbReference type="NCBI Taxonomy" id="44689"/>
    <lineage>
        <taxon>Eukaryota</taxon>
        <taxon>Amoebozoa</taxon>
        <taxon>Evosea</taxon>
        <taxon>Eumycetozoa</taxon>
        <taxon>Dictyostelia</taxon>
        <taxon>Dictyosteliales</taxon>
        <taxon>Dictyosteliaceae</taxon>
        <taxon>Dictyostelium</taxon>
    </lineage>
</organism>
<protein>
    <recommendedName>
        <fullName>Probable dihydroxyacetone kinase</fullName>
        <shortName>DHA kinase</shortName>
        <ecNumber>2.7.1.28</ecNumber>
        <ecNumber>2.7.1.29</ecNumber>
    </recommendedName>
    <alternativeName>
        <fullName>Glycerone kinase</fullName>
    </alternativeName>
    <alternativeName>
        <fullName>Triokinase</fullName>
    </alternativeName>
    <alternativeName>
        <fullName>Triose kinase</fullName>
    </alternativeName>
</protein>